<keyword id="KW-1185">Reference proteome</keyword>
<keyword id="KW-0687">Ribonucleoprotein</keyword>
<keyword id="KW-0689">Ribosomal protein</keyword>
<keyword id="KW-0694">RNA-binding</keyword>
<keyword id="KW-0699">rRNA-binding</keyword>
<reference key="1">
    <citation type="journal article" date="2007" name="J. Bacteriol.">
        <title>The complete genome sequence of Roseobacter denitrificans reveals a mixotrophic rather than photosynthetic metabolism.</title>
        <authorList>
            <person name="Swingley W.D."/>
            <person name="Sadekar S."/>
            <person name="Mastrian S.D."/>
            <person name="Matthies H.J."/>
            <person name="Hao J."/>
            <person name="Ramos H."/>
            <person name="Acharya C.R."/>
            <person name="Conrad A.L."/>
            <person name="Taylor H.L."/>
            <person name="Dejesa L.C."/>
            <person name="Shah M.K."/>
            <person name="O'Huallachain M.E."/>
            <person name="Lince M.T."/>
            <person name="Blankenship R.E."/>
            <person name="Beatty J.T."/>
            <person name="Touchman J.W."/>
        </authorList>
    </citation>
    <scope>NUCLEOTIDE SEQUENCE [LARGE SCALE GENOMIC DNA]</scope>
    <source>
        <strain>ATCC 33942 / OCh 114</strain>
    </source>
</reference>
<sequence>MSRIGKKPVDLPAGVSASVSGQTIEIKGPKGTRAFKATDDVTLTVEDNVVTVTPRGKSKRARQQWGMSRTMVANLVTGVSEGFKKELEIQGVGYRAAMTGNTLKLNLGLSHDVDYTPPAGVTVTAPKQTEIVVEGIDEQLVGQVAANIRQWRKPEPYKGKGIRYKGEFVFRKEGKKK</sequence>
<proteinExistence type="inferred from homology"/>
<protein>
    <recommendedName>
        <fullName evidence="1">Large ribosomal subunit protein uL6</fullName>
    </recommendedName>
    <alternativeName>
        <fullName evidence="2">50S ribosomal protein L6</fullName>
    </alternativeName>
</protein>
<gene>
    <name evidence="1" type="primary">rplF</name>
    <name type="ordered locus">RD1_1425</name>
</gene>
<dbReference type="EMBL" id="CP000362">
    <property type="protein sequence ID" value="ABG31064.1"/>
    <property type="molecule type" value="Genomic_DNA"/>
</dbReference>
<dbReference type="RefSeq" id="WP_011567684.1">
    <property type="nucleotide sequence ID" value="NC_008209.1"/>
</dbReference>
<dbReference type="SMR" id="Q16AC9"/>
<dbReference type="STRING" id="375451.RD1_1425"/>
<dbReference type="KEGG" id="rde:RD1_1425"/>
<dbReference type="eggNOG" id="COG0097">
    <property type="taxonomic scope" value="Bacteria"/>
</dbReference>
<dbReference type="HOGENOM" id="CLU_065464_1_2_5"/>
<dbReference type="OrthoDB" id="9805007at2"/>
<dbReference type="Proteomes" id="UP000007029">
    <property type="component" value="Chromosome"/>
</dbReference>
<dbReference type="GO" id="GO:0022625">
    <property type="term" value="C:cytosolic large ribosomal subunit"/>
    <property type="evidence" value="ECO:0007669"/>
    <property type="project" value="TreeGrafter"/>
</dbReference>
<dbReference type="GO" id="GO:0019843">
    <property type="term" value="F:rRNA binding"/>
    <property type="evidence" value="ECO:0007669"/>
    <property type="project" value="UniProtKB-UniRule"/>
</dbReference>
<dbReference type="GO" id="GO:0003735">
    <property type="term" value="F:structural constituent of ribosome"/>
    <property type="evidence" value="ECO:0007669"/>
    <property type="project" value="InterPro"/>
</dbReference>
<dbReference type="GO" id="GO:0002181">
    <property type="term" value="P:cytoplasmic translation"/>
    <property type="evidence" value="ECO:0007669"/>
    <property type="project" value="TreeGrafter"/>
</dbReference>
<dbReference type="FunFam" id="3.90.930.12:FF:000001">
    <property type="entry name" value="50S ribosomal protein L6"/>
    <property type="match status" value="1"/>
</dbReference>
<dbReference type="Gene3D" id="3.90.930.12">
    <property type="entry name" value="Ribosomal protein L6, alpha-beta domain"/>
    <property type="match status" value="2"/>
</dbReference>
<dbReference type="HAMAP" id="MF_01365_B">
    <property type="entry name" value="Ribosomal_uL6_B"/>
    <property type="match status" value="1"/>
</dbReference>
<dbReference type="InterPro" id="IPR000702">
    <property type="entry name" value="Ribosomal_uL6-like"/>
</dbReference>
<dbReference type="InterPro" id="IPR036789">
    <property type="entry name" value="Ribosomal_uL6-like_a/b-dom_sf"/>
</dbReference>
<dbReference type="InterPro" id="IPR020040">
    <property type="entry name" value="Ribosomal_uL6_a/b-dom"/>
</dbReference>
<dbReference type="InterPro" id="IPR019906">
    <property type="entry name" value="Ribosomal_uL6_bac-type"/>
</dbReference>
<dbReference type="InterPro" id="IPR002358">
    <property type="entry name" value="Ribosomal_uL6_CS"/>
</dbReference>
<dbReference type="NCBIfam" id="TIGR03654">
    <property type="entry name" value="L6_bact"/>
    <property type="match status" value="1"/>
</dbReference>
<dbReference type="PANTHER" id="PTHR11655">
    <property type="entry name" value="60S/50S RIBOSOMAL PROTEIN L6/L9"/>
    <property type="match status" value="1"/>
</dbReference>
<dbReference type="PANTHER" id="PTHR11655:SF14">
    <property type="entry name" value="LARGE RIBOSOMAL SUBUNIT PROTEIN UL6M"/>
    <property type="match status" value="1"/>
</dbReference>
<dbReference type="Pfam" id="PF00347">
    <property type="entry name" value="Ribosomal_L6"/>
    <property type="match status" value="2"/>
</dbReference>
<dbReference type="PIRSF" id="PIRSF002162">
    <property type="entry name" value="Ribosomal_L6"/>
    <property type="match status" value="1"/>
</dbReference>
<dbReference type="PRINTS" id="PR00059">
    <property type="entry name" value="RIBOSOMALL6"/>
</dbReference>
<dbReference type="SUPFAM" id="SSF56053">
    <property type="entry name" value="Ribosomal protein L6"/>
    <property type="match status" value="2"/>
</dbReference>
<dbReference type="PROSITE" id="PS00525">
    <property type="entry name" value="RIBOSOMAL_L6_1"/>
    <property type="match status" value="1"/>
</dbReference>
<evidence type="ECO:0000255" key="1">
    <source>
        <dbReference type="HAMAP-Rule" id="MF_01365"/>
    </source>
</evidence>
<evidence type="ECO:0000305" key="2"/>
<comment type="function">
    <text evidence="1">This protein binds to the 23S rRNA, and is important in its secondary structure. It is located near the subunit interface in the base of the L7/L12 stalk, and near the tRNA binding site of the peptidyltransferase center.</text>
</comment>
<comment type="subunit">
    <text evidence="1">Part of the 50S ribosomal subunit.</text>
</comment>
<comment type="similarity">
    <text evidence="1">Belongs to the universal ribosomal protein uL6 family.</text>
</comment>
<name>RL6_ROSDO</name>
<organism>
    <name type="scientific">Roseobacter denitrificans (strain ATCC 33942 / OCh 114)</name>
    <name type="common">Erythrobacter sp. (strain OCh 114)</name>
    <name type="synonym">Roseobacter denitrificans</name>
    <dbReference type="NCBI Taxonomy" id="375451"/>
    <lineage>
        <taxon>Bacteria</taxon>
        <taxon>Pseudomonadati</taxon>
        <taxon>Pseudomonadota</taxon>
        <taxon>Alphaproteobacteria</taxon>
        <taxon>Rhodobacterales</taxon>
        <taxon>Roseobacteraceae</taxon>
        <taxon>Roseobacter</taxon>
    </lineage>
</organism>
<accession>Q16AC9</accession>
<feature type="chain" id="PRO_0000260932" description="Large ribosomal subunit protein uL6">
    <location>
        <begin position="1"/>
        <end position="177"/>
    </location>
</feature>